<gene>
    <name evidence="7" type="primary">pb-H2</name>
</gene>
<evidence type="ECO:0000250" key="1"/>
<evidence type="ECO:0000255" key="2"/>
<evidence type="ECO:0000256" key="3">
    <source>
        <dbReference type="SAM" id="MobiDB-lite"/>
    </source>
</evidence>
<evidence type="ECO:0000269" key="4">
    <source>
    </source>
</evidence>
<evidence type="ECO:0000303" key="5">
    <source>
    </source>
</evidence>
<evidence type="ECO:0000305" key="6"/>
<evidence type="ECO:0000312" key="7">
    <source>
        <dbReference type="EMBL" id="CAK55550.1"/>
    </source>
</evidence>
<dbReference type="EMBL" id="AM283483">
    <property type="protein sequence ID" value="CAK55550.1"/>
    <property type="molecule type" value="mRNA"/>
</dbReference>
<dbReference type="GO" id="GO:0005576">
    <property type="term" value="C:extracellular region"/>
    <property type="evidence" value="ECO:0007669"/>
    <property type="project" value="UniProtKB-SubCell"/>
</dbReference>
<dbReference type="GO" id="GO:0090729">
    <property type="term" value="F:toxin activity"/>
    <property type="evidence" value="ECO:0007669"/>
    <property type="project" value="UniProtKB-KW"/>
</dbReference>
<dbReference type="GO" id="GO:0006952">
    <property type="term" value="P:defense response"/>
    <property type="evidence" value="ECO:0007669"/>
    <property type="project" value="UniProtKB-KW"/>
</dbReference>
<dbReference type="GO" id="GO:0042311">
    <property type="term" value="P:vasodilation"/>
    <property type="evidence" value="ECO:0007669"/>
    <property type="project" value="UniProtKB-KW"/>
</dbReference>
<dbReference type="InterPro" id="IPR004275">
    <property type="entry name" value="Frog_antimicrobial_propeptide"/>
</dbReference>
<dbReference type="Pfam" id="PF03032">
    <property type="entry name" value="FSAP_sig_propep"/>
    <property type="match status" value="1"/>
</dbReference>
<organism>
    <name type="scientific">Pithecopus azureus</name>
    <name type="common">Orange-legged monkey tree frog</name>
    <name type="synonym">Phyllomedusa azurea</name>
    <dbReference type="NCBI Taxonomy" id="2034991"/>
    <lineage>
        <taxon>Eukaryota</taxon>
        <taxon>Metazoa</taxon>
        <taxon>Chordata</taxon>
        <taxon>Craniata</taxon>
        <taxon>Vertebrata</taxon>
        <taxon>Euteleostomi</taxon>
        <taxon>Amphibia</taxon>
        <taxon>Batrachia</taxon>
        <taxon>Anura</taxon>
        <taxon>Neobatrachia</taxon>
        <taxon>Hyloidea</taxon>
        <taxon>Hylidae</taxon>
        <taxon>Phyllomedusinae</taxon>
        <taxon>Pithecopus</taxon>
    </lineage>
</organism>
<feature type="signal peptide" evidence="2">
    <location>
        <begin position="1"/>
        <end position="22"/>
    </location>
</feature>
<feature type="propeptide" id="PRO_0000250594" evidence="4">
    <location>
        <begin position="23"/>
        <end position="50"/>
    </location>
</feature>
<feature type="peptide" id="PRO_0000250595" description="[Val1,Hyp2,Thr6]-bradykinyl-Gln,Thr" evidence="4">
    <location>
        <begin position="51"/>
        <end position="61"/>
    </location>
</feature>
<feature type="peptide" id="PRO_0000343885" description="[Val1,Hyp2,Thr6]-bradykinin" evidence="4">
    <location>
        <begin position="51"/>
        <end position="59"/>
    </location>
</feature>
<feature type="region of interest" description="Disordered" evidence="3">
    <location>
        <begin position="24"/>
        <end position="61"/>
    </location>
</feature>
<feature type="compositionally biased region" description="Acidic residues" evidence="3">
    <location>
        <begin position="30"/>
        <end position="42"/>
    </location>
</feature>
<feature type="modified residue" description="4-hydroxyproline" evidence="4">
    <location>
        <position position="52"/>
    </location>
</feature>
<reference evidence="6 7" key="1">
    <citation type="journal article" date="2006" name="Rapid Commun. Mass Spectrom.">
        <title>Bradykinin-related peptides from Phyllomedusa hypochondrialis azurea: Mass spectrometric structural characterisation and cloning of precursor cDNAs.</title>
        <authorList>
            <person name="Thompson A.H."/>
            <person name="Bjourson A.J."/>
            <person name="Shaw C."/>
            <person name="McClean S."/>
        </authorList>
    </citation>
    <scope>NUCLEOTIDE SEQUENCE [MRNA]</scope>
    <scope>PROTEIN SEQUENCE OF 51-61</scope>
    <scope>SUBCELLULAR LOCATION</scope>
    <scope>TISSUE SPECIFICITY</scope>
    <scope>MASS SPECTROMETRY</scope>
    <scope>HYDROXYLATION AT PRO-52</scope>
    <source>
        <tissue>Skin</tissue>
        <tissue evidence="4">Skin secretion</tissue>
    </source>
</reference>
<protein>
    <recommendedName>
        <fullName>Probradykinin-2</fullName>
    </recommendedName>
    <component>
        <recommendedName>
            <fullName evidence="5">[Val1,Hyp2,Thr6]-bradykinyl-Gln,Thr</fullName>
        </recommendedName>
        <alternativeName>
            <fullName evidence="5">[Val1,Hyp2,Thr6]-bradykinin-Gln,Thr</fullName>
        </alternativeName>
    </component>
    <component>
        <recommendedName>
            <fullName evidence="5">[Val1,Hyp2,Thr6]-bradykinin</fullName>
        </recommendedName>
    </component>
</protein>
<keyword id="KW-0878">Amphibian defense peptide</keyword>
<keyword id="KW-0903">Direct protein sequencing</keyword>
<keyword id="KW-1213">G-protein coupled receptor impairing toxin</keyword>
<keyword id="KW-0379">Hydroxylation</keyword>
<keyword id="KW-0964">Secreted</keyword>
<keyword id="KW-0732">Signal</keyword>
<keyword id="KW-0800">Toxin</keyword>
<keyword id="KW-0838">Vasoactive</keyword>
<keyword id="KW-0840">Vasodilator</keyword>
<proteinExistence type="evidence at protein level"/>
<accession>Q0VTT8</accession>
<accession>P84934</accession>
<name>BRK2_PITAZ</name>
<comment type="function">
    <text evidence="1">May produce in vitro relaxation of rat arterial smooth muscle and constriction of intestinal smooth muscle (By similarity). May target bradykinin receptors (BDKRB).</text>
</comment>
<comment type="subcellular location">
    <subcellularLocation>
        <location evidence="4">Secreted</location>
    </subcellularLocation>
</comment>
<comment type="tissue specificity">
    <text evidence="4">Expressed by the skin glands.</text>
</comment>
<comment type="mass spectrometry">
    <molecule>[Val1,Hyp2,Thr6]-bradykinyl-Gln,Thr</molecule>
</comment>
<comment type="mass spectrometry">
    <molecule>[Val1,Hyp2,Thr6]-bradykinin</molecule>
</comment>
<comment type="similarity">
    <text evidence="6">Belongs to the frog skin active peptide (FSAP) family. Bradykinin-related peptide subfamily.</text>
</comment>
<sequence>MSFLKKSLFLVLFLGLVSFSICEEEKRETEEEENEDEIEEQSEEKKRFEPVPPGFTPFRQT</sequence>